<reference key="1">
    <citation type="journal article" date="1999" name="Nature">
        <title>Sequence and analysis of chromosome 2 of the plant Arabidopsis thaliana.</title>
        <authorList>
            <person name="Lin X."/>
            <person name="Kaul S."/>
            <person name="Rounsley S.D."/>
            <person name="Shea T.P."/>
            <person name="Benito M.-I."/>
            <person name="Town C.D."/>
            <person name="Fujii C.Y."/>
            <person name="Mason T.M."/>
            <person name="Bowman C.L."/>
            <person name="Barnstead M.E."/>
            <person name="Feldblyum T.V."/>
            <person name="Buell C.R."/>
            <person name="Ketchum K.A."/>
            <person name="Lee J.J."/>
            <person name="Ronning C.M."/>
            <person name="Koo H.L."/>
            <person name="Moffat K.S."/>
            <person name="Cronin L.A."/>
            <person name="Shen M."/>
            <person name="Pai G."/>
            <person name="Van Aken S."/>
            <person name="Umayam L."/>
            <person name="Tallon L.J."/>
            <person name="Gill J.E."/>
            <person name="Adams M.D."/>
            <person name="Carrera A.J."/>
            <person name="Creasy T.H."/>
            <person name="Goodman H.M."/>
            <person name="Somerville C.R."/>
            <person name="Copenhaver G.P."/>
            <person name="Preuss D."/>
            <person name="Nierman W.C."/>
            <person name="White O."/>
            <person name="Eisen J.A."/>
            <person name="Salzberg S.L."/>
            <person name="Fraser C.M."/>
            <person name="Venter J.C."/>
        </authorList>
    </citation>
    <scope>NUCLEOTIDE SEQUENCE [LARGE SCALE GENOMIC DNA]</scope>
    <source>
        <strain>cv. Columbia</strain>
    </source>
</reference>
<reference key="2">
    <citation type="journal article" date="2017" name="Plant J.">
        <title>Araport11: a complete reannotation of the Arabidopsis thaliana reference genome.</title>
        <authorList>
            <person name="Cheng C.Y."/>
            <person name="Krishnakumar V."/>
            <person name="Chan A.P."/>
            <person name="Thibaud-Nissen F."/>
            <person name="Schobel S."/>
            <person name="Town C.D."/>
        </authorList>
    </citation>
    <scope>GENOME REANNOTATION</scope>
    <source>
        <strain>cv. Columbia</strain>
    </source>
</reference>
<reference key="3">
    <citation type="journal article" date="2003" name="Science">
        <title>Empirical analysis of transcriptional activity in the Arabidopsis genome.</title>
        <authorList>
            <person name="Yamada K."/>
            <person name="Lim J."/>
            <person name="Dale J.M."/>
            <person name="Chen H."/>
            <person name="Shinn P."/>
            <person name="Palm C.J."/>
            <person name="Southwick A.M."/>
            <person name="Wu H.C."/>
            <person name="Kim C.J."/>
            <person name="Nguyen M."/>
            <person name="Pham P.K."/>
            <person name="Cheuk R.F."/>
            <person name="Karlin-Newmann G."/>
            <person name="Liu S.X."/>
            <person name="Lam B."/>
            <person name="Sakano H."/>
            <person name="Wu T."/>
            <person name="Yu G."/>
            <person name="Miranda M."/>
            <person name="Quach H.L."/>
            <person name="Tripp M."/>
            <person name="Chang C.H."/>
            <person name="Lee J.M."/>
            <person name="Toriumi M.J."/>
            <person name="Chan M.M."/>
            <person name="Tang C.C."/>
            <person name="Onodera C.S."/>
            <person name="Deng J.M."/>
            <person name="Akiyama K."/>
            <person name="Ansari Y."/>
            <person name="Arakawa T."/>
            <person name="Banh J."/>
            <person name="Banno F."/>
            <person name="Bowser L."/>
            <person name="Brooks S.Y."/>
            <person name="Carninci P."/>
            <person name="Chao Q."/>
            <person name="Choy N."/>
            <person name="Enju A."/>
            <person name="Goldsmith A.D."/>
            <person name="Gurjal M."/>
            <person name="Hansen N.F."/>
            <person name="Hayashizaki Y."/>
            <person name="Johnson-Hopson C."/>
            <person name="Hsuan V.W."/>
            <person name="Iida K."/>
            <person name="Karnes M."/>
            <person name="Khan S."/>
            <person name="Koesema E."/>
            <person name="Ishida J."/>
            <person name="Jiang P.X."/>
            <person name="Jones T."/>
            <person name="Kawai J."/>
            <person name="Kamiya A."/>
            <person name="Meyers C."/>
            <person name="Nakajima M."/>
            <person name="Narusaka M."/>
            <person name="Seki M."/>
            <person name="Sakurai T."/>
            <person name="Satou M."/>
            <person name="Tamse R."/>
            <person name="Vaysberg M."/>
            <person name="Wallender E.K."/>
            <person name="Wong C."/>
            <person name="Yamamura Y."/>
            <person name="Yuan S."/>
            <person name="Shinozaki K."/>
            <person name="Davis R.W."/>
            <person name="Theologis A."/>
            <person name="Ecker J.R."/>
        </authorList>
    </citation>
    <scope>NUCLEOTIDE SEQUENCE [LARGE SCALE MRNA]</scope>
    <source>
        <strain>cv. Columbia</strain>
    </source>
</reference>
<reference key="4">
    <citation type="submission" date="2002-03" db="EMBL/GenBank/DDBJ databases">
        <title>Full-length cDNA from Arabidopsis thaliana.</title>
        <authorList>
            <person name="Brover V.V."/>
            <person name="Troukhan M.E."/>
            <person name="Alexandrov N.A."/>
            <person name="Lu Y.-P."/>
            <person name="Flavell R.B."/>
            <person name="Feldmann K.A."/>
        </authorList>
    </citation>
    <scope>NUCLEOTIDE SEQUENCE [LARGE SCALE MRNA]</scope>
</reference>
<reference key="5">
    <citation type="journal article" date="2009" name="Nature">
        <title>A gate-latch-lock mechanism for hormone signalling by abscisic acid receptors.</title>
        <authorList>
            <person name="Melcher K."/>
            <person name="Ng L.-M."/>
            <person name="Zhou X.E."/>
            <person name="Soon F.-F."/>
            <person name="Xu Y."/>
            <person name="Suino-Powell K.M."/>
            <person name="Park S.-Y."/>
            <person name="Weiner J.J."/>
            <person name="Fujii H."/>
            <person name="Chinnusamy V."/>
            <person name="Kovach A."/>
            <person name="Li J."/>
            <person name="Wang Y."/>
            <person name="Li J."/>
            <person name="Peterson F.C."/>
            <person name="Jensen D.R."/>
            <person name="Yong E.-L."/>
            <person name="Volkman B.F."/>
            <person name="Cutler S.R."/>
            <person name="Zhu J.-K."/>
            <person name="Xu H.E."/>
        </authorList>
    </citation>
    <scope>INTERACTION WITH HAB1; ABI1 AND ABI2</scope>
</reference>
<reference key="6">
    <citation type="journal article" date="2009" name="Plant J.">
        <title>Modulation of drought resistance by the abscisic acid receptor PYL5 through inhibition of clade A PP2Cs.</title>
        <authorList>
            <person name="Santiago J."/>
            <person name="Rodrigues A."/>
            <person name="Saez A."/>
            <person name="Rubio S."/>
            <person name="Antoni R."/>
            <person name="Dupeux F."/>
            <person name="Park S.-Y."/>
            <person name="Marquez J.A."/>
            <person name="Cutler S.R."/>
            <person name="Rodriguez P.L."/>
        </authorList>
    </citation>
    <scope>FUNCTION</scope>
</reference>
<reference key="7">
    <citation type="journal article" date="2009" name="Science">
        <title>Regulators of PP2C phosphatase activity function as abscisic acid sensors.</title>
        <authorList>
            <person name="Ma Y."/>
            <person name="Szostkiewicz I."/>
            <person name="Korte A."/>
            <person name="Moes D."/>
            <person name="Yang Y."/>
            <person name="Christmann A."/>
            <person name="Grill E."/>
        </authorList>
    </citation>
    <scope>GENE FAMILY</scope>
</reference>
<reference key="8">
    <citation type="journal article" date="2009" name="Science">
        <title>Abscisic acid inhibits type 2C protein phosphatases via the PYR/PYL family of START proteins.</title>
        <authorList>
            <person name="Park S.-Y."/>
            <person name="Fung P."/>
            <person name="Nishimura N."/>
            <person name="Jensen D.R."/>
            <person name="Fujii H."/>
            <person name="Zhao Y."/>
            <person name="Lumba S."/>
            <person name="Santiago J."/>
            <person name="Rodrigues A."/>
            <person name="Chow T.F."/>
            <person name="Alfred S.E."/>
            <person name="Bonetta D."/>
            <person name="Finkelstein R."/>
            <person name="Provart N.J."/>
            <person name="Desveaux D."/>
            <person name="Rodriguez P.L."/>
            <person name="McCourt P."/>
            <person name="Zhu J.-K."/>
            <person name="Schroeder J.I."/>
            <person name="Volkman B.F."/>
            <person name="Cutler S.R."/>
        </authorList>
    </citation>
    <scope>INTERACTION WITH HAB1</scope>
    <scope>GENE FAMILY</scope>
    <scope>NOMENCLATURE</scope>
</reference>
<reference key="9">
    <citation type="journal article" date="2010" name="Plant J.">
        <title>PYR/PYL/RCAR family members are major in-vivo ABI1 protein phosphatase 2C-interacting proteins in Arabidopsis.</title>
        <authorList>
            <person name="Nishimura N."/>
            <person name="Sarkeshik A."/>
            <person name="Nito K."/>
            <person name="Park S.-Y."/>
            <person name="Wang A."/>
            <person name="Carvalho P.C."/>
            <person name="Lee S."/>
            <person name="Caddell D.F."/>
            <person name="Cutler S.R."/>
            <person name="Chory J."/>
            <person name="Yates J.R."/>
            <person name="Schroeder J.I."/>
        </authorList>
    </citation>
    <scope>INTERACTION WITH ABI1</scope>
    <scope>IDENTIFICATION BY MASS SPECTROMETRY</scope>
</reference>
<reference key="10">
    <citation type="journal article" date="2011" name="Mol. Cell">
        <title>The molecular basis of ABA-independent inhibition of PP2Cs by a subclass of PYL proteins.</title>
        <authorList>
            <person name="Hao Q."/>
            <person name="Yin P."/>
            <person name="Li W."/>
            <person name="Wang L."/>
            <person name="Yan C."/>
            <person name="Lin Z."/>
            <person name="Wu J.Z."/>
            <person name="Wang J."/>
            <person name="Yan S.F."/>
            <person name="Yan N."/>
        </authorList>
    </citation>
    <scope>FUNCTION</scope>
    <scope>MONOMER</scope>
    <scope>GENE FAMILY</scope>
</reference>
<reference key="11">
    <citation type="journal article" date="2013" name="PLoS ONE">
        <title>Structural insights into the abscisic acid stereospecificity by the ABA receptors PYR/PYL/RCAR.</title>
        <authorList>
            <person name="Zhang X."/>
            <person name="Jiang L."/>
            <person name="Wang G."/>
            <person name="Yu L."/>
            <person name="Zhang Q."/>
            <person name="Xin Q."/>
            <person name="Wu W."/>
            <person name="Gong Z."/>
            <person name="Chen Z."/>
        </authorList>
    </citation>
    <scope>FUNCTION</scope>
    <scope>GENE FAMILY</scope>
</reference>
<reference key="12">
    <citation type="journal article" date="2014" name="Plant Cell">
        <title>Targeted degradation of abscisic acid receptors is mediated by the ubiquitin ligase substrate adaptor DDA1 in Arabidopsis.</title>
        <authorList>
            <person name="Irigoyen M.L."/>
            <person name="Iniesto E."/>
            <person name="Rodriguez L."/>
            <person name="Puga M.I."/>
            <person name="Yanagawa Y."/>
            <person name="Pick E."/>
            <person name="Strickland E."/>
            <person name="Paz-Ares J."/>
            <person name="Wei N."/>
            <person name="De Jaeger G."/>
            <person name="Rodriguez P.L."/>
            <person name="Deng X.W."/>
            <person name="Rubio V."/>
        </authorList>
    </citation>
    <scope>INTERACTION WITH DDA1</scope>
</reference>
<reference key="13">
    <citation type="journal article" date="2014" name="Plant Cell">
        <title>C2-domain abscisic acid-related proteins mediate the interaction of PYR/PYL/RCAR abscisic acid receptors with the plasma membrane and regulate abscisic acid sensitivity in Arabidopsis.</title>
        <authorList>
            <person name="Rodriguez L."/>
            <person name="Gonzalez-Guzman M."/>
            <person name="Diaz M."/>
            <person name="Rodrigues A."/>
            <person name="Izquierdo-Garcia A.C."/>
            <person name="Peirats-Llobet M."/>
            <person name="Fernandez M.A."/>
            <person name="Antoni R."/>
            <person name="Fernandez D."/>
            <person name="Marquez J.A."/>
            <person name="Mulet J.M."/>
            <person name="Albert A."/>
            <person name="Rodriguez P.L."/>
        </authorList>
    </citation>
    <scope>INTERACTION WITH CAR1 AND CAR4</scope>
    <scope>SUBCELLULAR LOCATION</scope>
</reference>
<reference key="14">
    <citation type="journal article" date="2014" name="Plant J.">
        <title>The single-subunit RING-type E3 ubiquitin ligase RSL1 targets PYL4 and PYR1 ABA receptors in plasma membrane to modulate abscisic acid signaling.</title>
        <authorList>
            <person name="Bueso E."/>
            <person name="Rodriguez L."/>
            <person name="Lorenzo-Orts L."/>
            <person name="Gonzalez-Guzman M."/>
            <person name="Sayas E."/>
            <person name="Munoz-Bertomeu J."/>
            <person name="Ibanez C."/>
            <person name="Serrano R."/>
            <person name="Rodriguez P.L."/>
        </authorList>
    </citation>
    <scope>INTERACTION WITH RSL1</scope>
    <scope>SUBCELLULAR LOCATION</scope>
    <scope>PTM</scope>
    <source>
        <strain>cv. Columbia</strain>
    </source>
</reference>
<reference key="15">
    <citation type="journal article" date="2016" name="Plant Cell">
        <title>FYVE1/FREE1 interacts with the PYL4 ABA receptor and mediates its delivery to the vacuolar degradation pathway.</title>
        <authorList>
            <person name="Belda-Palazon B."/>
            <person name="Rodriguez L."/>
            <person name="Fernandez M.A."/>
            <person name="Castillo M.-C."/>
            <person name="Anderson E.M."/>
            <person name="Gao C."/>
            <person name="Gonzalez-Guzman M."/>
            <person name="Peirats-Llobet M."/>
            <person name="Zhao Q."/>
            <person name="De Winne N."/>
            <person name="Gevaert K."/>
            <person name="De Jaeger G."/>
            <person name="Jiang L."/>
            <person name="Leon J."/>
            <person name="Mullen R.T."/>
            <person name="Rodriguez P.L."/>
        </authorList>
    </citation>
    <scope>INTERACTION WITH FREE1</scope>
    <scope>SUBCELLULAR LOCATION</scope>
    <source>
        <strain>cv. Columbia</strain>
    </source>
</reference>
<reference key="16">
    <citation type="journal article" date="2016" name="PLoS Genet.">
        <title>Type one protein phosphatase 1 and its regulatory protein inhibitor 2 negatively regulate ABA signaling.</title>
        <authorList>
            <person name="Hou Y.J."/>
            <person name="Zhu Y."/>
            <person name="Wang P."/>
            <person name="Zhao Y."/>
            <person name="Xie S."/>
            <person name="Batelli G."/>
            <person name="Wang B."/>
            <person name="Duan C.G."/>
            <person name="Wang X."/>
            <person name="Xing L."/>
            <person name="Lei M."/>
            <person name="Yan J."/>
            <person name="Zhu X."/>
            <person name="Zhu J.K."/>
        </authorList>
    </citation>
    <scope>INTERACTION WITH TOPP1</scope>
</reference>
<feature type="chain" id="PRO_0000391739" description="Abscisic acid receptor PYL4">
    <location>
        <begin position="1"/>
        <end position="207"/>
    </location>
</feature>
<feature type="region of interest" description="START-like">
    <location>
        <begin position="45"/>
        <end position="195"/>
    </location>
</feature>
<feature type="short sequence motif" description="Gate loop" evidence="3">
    <location>
        <begin position="107"/>
        <end position="111"/>
    </location>
</feature>
<feature type="short sequence motif" description="Latch loop" evidence="3">
    <location>
        <begin position="137"/>
        <end position="139"/>
    </location>
</feature>
<feature type="binding site" evidence="1">
    <location>
        <position position="81"/>
    </location>
    <ligand>
        <name>abscisate</name>
        <dbReference type="ChEBI" id="CHEBI:62432"/>
    </ligand>
</feature>
<feature type="binding site" evidence="1">
    <location>
        <begin position="111"/>
        <end position="116"/>
    </location>
    <ligand>
        <name>abscisate</name>
        <dbReference type="ChEBI" id="CHEBI:62432"/>
    </ligand>
</feature>
<feature type="binding site" evidence="1">
    <location>
        <begin position="138"/>
        <end position="144"/>
    </location>
    <ligand>
        <name>abscisate</name>
        <dbReference type="ChEBI" id="CHEBI:62432"/>
    </ligand>
</feature>
<feature type="binding site" evidence="1">
    <location>
        <position position="160"/>
    </location>
    <ligand>
        <name>abscisate</name>
        <dbReference type="ChEBI" id="CHEBI:62432"/>
    </ligand>
</feature>
<feature type="site" description="Involved in interactions with PP2Cs" evidence="1">
    <location>
        <position position="110"/>
    </location>
</feature>
<feature type="site" description="Involved in interactions with PP2Cs" evidence="1">
    <location>
        <position position="171"/>
    </location>
</feature>
<feature type="site" description="Involved in ABA binding" evidence="2">
    <location>
        <position position="179"/>
    </location>
</feature>
<feature type="disulfide bond" description="Reversible" evidence="2">
    <location>
        <begin position="52"/>
        <end position="176"/>
    </location>
</feature>
<keyword id="KW-0938">Abscisic acid signaling pathway</keyword>
<keyword id="KW-1003">Cell membrane</keyword>
<keyword id="KW-0963">Cytoplasm</keyword>
<keyword id="KW-1015">Disulfide bond</keyword>
<keyword id="KW-0472">Membrane</keyword>
<keyword id="KW-0539">Nucleus</keyword>
<keyword id="KW-0650">Protein phosphatase inhibitor</keyword>
<keyword id="KW-0675">Receptor</keyword>
<keyword id="KW-1185">Reference proteome</keyword>
<keyword id="KW-0926">Vacuole</keyword>
<name>PYL4_ARATH</name>
<protein>
    <recommendedName>
        <fullName evidence="16 17 19 20 21 22">Abscisic acid receptor PYL4</fullName>
    </recommendedName>
    <alternativeName>
        <fullName evidence="18">ABI1-binding protein 2</fullName>
    </alternativeName>
    <alternativeName>
        <fullName evidence="16 17 19 20 21 22">PYR1-like protein 4</fullName>
    </alternativeName>
    <alternativeName>
        <fullName>Regulatory components of ABA receptor 10</fullName>
    </alternativeName>
</protein>
<evidence type="ECO:0000250" key="1">
    <source>
        <dbReference type="UniProtKB" id="O49686"/>
    </source>
</evidence>
<evidence type="ECO:0000250" key="2">
    <source>
        <dbReference type="UniProtKB" id="Q84MC7"/>
    </source>
</evidence>
<evidence type="ECO:0000250" key="3">
    <source>
        <dbReference type="UniProtKB" id="Q8VZS8"/>
    </source>
</evidence>
<evidence type="ECO:0000250" key="4">
    <source>
        <dbReference type="UniProtKB" id="Q9FLB1"/>
    </source>
</evidence>
<evidence type="ECO:0000269" key="5">
    <source>
    </source>
</evidence>
<evidence type="ECO:0000269" key="6">
    <source>
    </source>
</evidence>
<evidence type="ECO:0000269" key="7">
    <source>
    </source>
</evidence>
<evidence type="ECO:0000269" key="8">
    <source>
    </source>
</evidence>
<evidence type="ECO:0000269" key="9">
    <source>
    </source>
</evidence>
<evidence type="ECO:0000269" key="10">
    <source>
    </source>
</evidence>
<evidence type="ECO:0000269" key="11">
    <source>
    </source>
</evidence>
<evidence type="ECO:0000269" key="12">
    <source>
    </source>
</evidence>
<evidence type="ECO:0000269" key="13">
    <source>
    </source>
</evidence>
<evidence type="ECO:0000269" key="14">
    <source>
    </source>
</evidence>
<evidence type="ECO:0000269" key="15">
    <source>
    </source>
</evidence>
<evidence type="ECO:0000303" key="16">
    <source>
    </source>
</evidence>
<evidence type="ECO:0000303" key="17">
    <source>
    </source>
</evidence>
<evidence type="ECO:0000303" key="18">
    <source>
    </source>
</evidence>
<evidence type="ECO:0000303" key="19">
    <source>
    </source>
</evidence>
<evidence type="ECO:0000303" key="20">
    <source>
    </source>
</evidence>
<evidence type="ECO:0000303" key="21">
    <source>
    </source>
</evidence>
<evidence type="ECO:0000303" key="22">
    <source>
    </source>
</evidence>
<evidence type="ECO:0000305" key="23"/>
<evidence type="ECO:0000312" key="24">
    <source>
        <dbReference type="Araport" id="AT2G38310"/>
    </source>
</evidence>
<evidence type="ECO:0000312" key="25">
    <source>
        <dbReference type="EMBL" id="AAC28773.1"/>
    </source>
</evidence>
<dbReference type="EMBL" id="AC004683">
    <property type="protein sequence ID" value="AAC28773.1"/>
    <property type="molecule type" value="Genomic_DNA"/>
</dbReference>
<dbReference type="EMBL" id="CP002685">
    <property type="protein sequence ID" value="AEC09522.1"/>
    <property type="molecule type" value="Genomic_DNA"/>
</dbReference>
<dbReference type="EMBL" id="AY039586">
    <property type="protein sequence ID" value="AAK62641.1"/>
    <property type="molecule type" value="mRNA"/>
</dbReference>
<dbReference type="EMBL" id="AY054141">
    <property type="protein sequence ID" value="AAL06802.1"/>
    <property type="molecule type" value="mRNA"/>
</dbReference>
<dbReference type="EMBL" id="AY087146">
    <property type="protein sequence ID" value="AAM64704.1"/>
    <property type="molecule type" value="mRNA"/>
</dbReference>
<dbReference type="PIR" id="T02514">
    <property type="entry name" value="T02514"/>
</dbReference>
<dbReference type="RefSeq" id="NP_565887.1">
    <property type="nucleotide sequence ID" value="NM_129387.3"/>
</dbReference>
<dbReference type="SMR" id="O80920"/>
<dbReference type="BioGRID" id="3753">
    <property type="interactions" value="19"/>
</dbReference>
<dbReference type="DIP" id="DIP-53474N"/>
<dbReference type="FunCoup" id="O80920">
    <property type="interactions" value="372"/>
</dbReference>
<dbReference type="IntAct" id="O80920">
    <property type="interactions" value="16"/>
</dbReference>
<dbReference type="STRING" id="3702.O80920"/>
<dbReference type="iPTMnet" id="O80920"/>
<dbReference type="PaxDb" id="3702-AT2G38310.1"/>
<dbReference type="ProteomicsDB" id="226011"/>
<dbReference type="EnsemblPlants" id="AT2G38310.1">
    <property type="protein sequence ID" value="AT2G38310.1"/>
    <property type="gene ID" value="AT2G38310"/>
</dbReference>
<dbReference type="GeneID" id="818411"/>
<dbReference type="Gramene" id="AT2G38310.1">
    <property type="protein sequence ID" value="AT2G38310.1"/>
    <property type="gene ID" value="AT2G38310"/>
</dbReference>
<dbReference type="KEGG" id="ath:AT2G38310"/>
<dbReference type="Araport" id="AT2G38310"/>
<dbReference type="TAIR" id="AT2G38310">
    <property type="gene designation" value="PYL4"/>
</dbReference>
<dbReference type="eggNOG" id="ENOG502QWFG">
    <property type="taxonomic scope" value="Eukaryota"/>
</dbReference>
<dbReference type="HOGENOM" id="CLU_077517_0_0_1"/>
<dbReference type="InParanoid" id="O80920"/>
<dbReference type="OMA" id="AHVMSPN"/>
<dbReference type="OrthoDB" id="4436220at2759"/>
<dbReference type="PhylomeDB" id="O80920"/>
<dbReference type="PRO" id="PR:O80920"/>
<dbReference type="Proteomes" id="UP000006548">
    <property type="component" value="Chromosome 2"/>
</dbReference>
<dbReference type="ExpressionAtlas" id="O80920">
    <property type="expression patterns" value="baseline and differential"/>
</dbReference>
<dbReference type="GO" id="GO:0005737">
    <property type="term" value="C:cytoplasm"/>
    <property type="evidence" value="ECO:0000250"/>
    <property type="project" value="UniProtKB"/>
</dbReference>
<dbReference type="GO" id="GO:0005634">
    <property type="term" value="C:nucleus"/>
    <property type="evidence" value="ECO:0000250"/>
    <property type="project" value="UniProtKB"/>
</dbReference>
<dbReference type="GO" id="GO:0009705">
    <property type="term" value="C:plant-type vacuole membrane"/>
    <property type="evidence" value="ECO:0000314"/>
    <property type="project" value="UniProtKB"/>
</dbReference>
<dbReference type="GO" id="GO:0005886">
    <property type="term" value="C:plasma membrane"/>
    <property type="evidence" value="ECO:0000314"/>
    <property type="project" value="UniProtKB"/>
</dbReference>
<dbReference type="GO" id="GO:0010427">
    <property type="term" value="F:abscisic acid binding"/>
    <property type="evidence" value="ECO:0000250"/>
    <property type="project" value="UniProtKB"/>
</dbReference>
<dbReference type="GO" id="GO:0042803">
    <property type="term" value="F:protein homodimerization activity"/>
    <property type="evidence" value="ECO:0000250"/>
    <property type="project" value="UniProtKB"/>
</dbReference>
<dbReference type="GO" id="GO:0004864">
    <property type="term" value="F:protein phosphatase inhibitor activity"/>
    <property type="evidence" value="ECO:0000314"/>
    <property type="project" value="UniProtKB"/>
</dbReference>
<dbReference type="GO" id="GO:0038023">
    <property type="term" value="F:signaling receptor activity"/>
    <property type="evidence" value="ECO:0000314"/>
    <property type="project" value="UniProtKB"/>
</dbReference>
<dbReference type="GO" id="GO:0044389">
    <property type="term" value="F:ubiquitin-like protein ligase binding"/>
    <property type="evidence" value="ECO:0000353"/>
    <property type="project" value="UniProtKB"/>
</dbReference>
<dbReference type="GO" id="GO:0009738">
    <property type="term" value="P:abscisic acid-activated signaling pathway"/>
    <property type="evidence" value="ECO:0000314"/>
    <property type="project" value="UniProtKB"/>
</dbReference>
<dbReference type="CDD" id="cd07821">
    <property type="entry name" value="PYR_PYL_RCAR_like"/>
    <property type="match status" value="1"/>
</dbReference>
<dbReference type="FunFam" id="3.30.530.20:FF:000024">
    <property type="entry name" value="Abscisic acid receptor PYL4"/>
    <property type="match status" value="1"/>
</dbReference>
<dbReference type="Gene3D" id="3.30.530.20">
    <property type="match status" value="1"/>
</dbReference>
<dbReference type="InterPro" id="IPR050279">
    <property type="entry name" value="Plant_def-hormone_signal"/>
</dbReference>
<dbReference type="InterPro" id="IPR019587">
    <property type="entry name" value="Polyketide_cyclase/dehydratase"/>
</dbReference>
<dbReference type="InterPro" id="IPR023393">
    <property type="entry name" value="START-like_dom_sf"/>
</dbReference>
<dbReference type="PANTHER" id="PTHR31213:SF119">
    <property type="entry name" value="ABSCISIC ACID RECEPTOR PYL4"/>
    <property type="match status" value="1"/>
</dbReference>
<dbReference type="PANTHER" id="PTHR31213">
    <property type="entry name" value="OS08G0374000 PROTEIN-RELATED"/>
    <property type="match status" value="1"/>
</dbReference>
<dbReference type="Pfam" id="PF10604">
    <property type="entry name" value="Polyketide_cyc2"/>
    <property type="match status" value="1"/>
</dbReference>
<dbReference type="SUPFAM" id="SSF55961">
    <property type="entry name" value="Bet v1-like"/>
    <property type="match status" value="1"/>
</dbReference>
<gene>
    <name evidence="16 17 19 20 21 22" type="primary">PYL4</name>
    <name evidence="18" type="synonym">ABIP2</name>
    <name type="synonym">RCAR10</name>
    <name evidence="24" type="ordered locus">At2g38310</name>
    <name evidence="25" type="ORF">T19C21.20</name>
</gene>
<comment type="function">
    <text evidence="6 9 10">Receptor for abscisic acid (ABA) required for ABA-mediated responses such as stomatal closure and germination inhibition. Inhibits the activity of group-A protein phosphatases type 2C (PP2Cs) when activated by ABA (PubMed:19624469, PubMed:21658606, PubMed:23844015). Can be activated by both (-)-ABA and (+)-ABA (PubMed:23844015).</text>
</comment>
<comment type="subunit">
    <text evidence="1 5 7 8 9 11 12 13 14 15">Monomer (PubMed:21658606). Homodimer. Binds ABA on one subunit only (By similarity). Interacts with HAB1, ABI1 and ABI2, and possibly with other PP2Cs (PubMed:19407142, PubMed:19874541, PubMed:19898420). Binds to CARs protein in an ABA-independent manner, both at the plasma membrane and in the nucleus. Interacts directly with CAR1 and CAR4 (PubMed:25465408). Interacts with TOPP1 (PubMed:26943172). Interacts with DDA1 (PubMed:24563205). Interacts with FREE1 (via N-terminus) (PubMed:27495812). Interacts with the E3 ubiquitin-protein ligase RSL1 at the plasma membrane (PubMed:25330042).</text>
</comment>
<comment type="interaction">
    <interactant intactId="EBI-2349683">
        <id>O80920</id>
    </interactant>
    <interactant intactId="EBI-782526">
        <id>P49597</id>
        <label>ABI1</label>
    </interactant>
    <organismsDiffer>false</organismsDiffer>
    <experiments>9</experiments>
</comment>
<comment type="interaction">
    <interactant intactId="EBI-2349683">
        <id>O80920</id>
    </interactant>
    <interactant intactId="EBI-15803514">
        <id>O04719-1</id>
        <label>ABI2</label>
    </interactant>
    <organismsDiffer>false</organismsDiffer>
    <experiments>2</experiments>
</comment>
<comment type="interaction">
    <interactant intactId="EBI-2349683">
        <id>O80920</id>
    </interactant>
    <interactant intactId="EBI-1573499">
        <id>Q9LNW3</id>
        <label>AIP1</label>
    </interactant>
    <organismsDiffer>false</organismsDiffer>
    <experiments>3</experiments>
</comment>
<comment type="interaction">
    <interactant intactId="EBI-2349683">
        <id>O80920</id>
    </interactant>
    <interactant intactId="EBI-4429795">
        <id>Q84K72</id>
        <label>At1g06510</label>
    </interactant>
    <organismsDiffer>false</organismsDiffer>
    <experiments>3</experiments>
</comment>
<comment type="interaction">
    <interactant intactId="EBI-2349683">
        <id>O80920</id>
    </interactant>
    <interactant intactId="EBI-4441103">
        <id>Q9ZW21</id>
        <label>At2g29380</label>
    </interactant>
    <organismsDiffer>false</organismsDiffer>
    <experiments>3</experiments>
</comment>
<comment type="interaction">
    <interactant intactId="EBI-2349683">
        <id>O80920</id>
    </interactant>
    <interactant intactId="EBI-4428781">
        <id>Q8VZQ4</id>
        <label>B''GAMMA</label>
    </interactant>
    <organismsDiffer>false</organismsDiffer>
    <experiments>3</experiments>
</comment>
<comment type="interaction">
    <interactant intactId="EBI-2349683">
        <id>O80920</id>
    </interactant>
    <interactant intactId="EBI-2309302">
        <id>Q9CAJ0</id>
        <label>HAB1</label>
    </interactant>
    <organismsDiffer>false</organismsDiffer>
    <experiments>8</experiments>
</comment>
<comment type="interaction">
    <interactant intactId="EBI-2349683">
        <id>O80920</id>
    </interactant>
    <interactant intactId="EBI-2319707">
        <id>Q94F58</id>
        <label>NAC089</label>
    </interactant>
    <organismsDiffer>false</organismsDiffer>
    <experiments>3</experiments>
</comment>
<comment type="interaction">
    <interactant intactId="EBI-2349683">
        <id>O80920</id>
    </interactant>
    <interactant intactId="EBI-1764934">
        <id>P49598</id>
        <label>PP2CA</label>
    </interactant>
    <organismsDiffer>false</organismsDiffer>
    <experiments>5</experiments>
</comment>
<comment type="interaction">
    <interactant intactId="EBI-2349683">
        <id>O80920</id>
    </interactant>
    <interactant intactId="EBI-4426178">
        <id>Q9LT89</id>
        <label>TCP19</label>
    </interactant>
    <organismsDiffer>false</organismsDiffer>
    <experiments>3</experiments>
</comment>
<comment type="interaction">
    <interactant intactId="EBI-2349683">
        <id>O80920</id>
    </interactant>
    <interactant intactId="EBI-1388539">
        <id>Q9LMA8</id>
        <label>TIFY10A</label>
    </interactant>
    <organismsDiffer>false</organismsDiffer>
    <experiments>3</experiments>
</comment>
<comment type="subcellular location">
    <subcellularLocation>
        <location evidence="4">Cytoplasm</location>
    </subcellularLocation>
    <subcellularLocation>
        <location evidence="13">Nucleus</location>
    </subcellularLocation>
    <subcellularLocation>
        <location evidence="12 13">Cell membrane</location>
    </subcellularLocation>
    <subcellularLocation>
        <location evidence="15">Vacuole</location>
    </subcellularLocation>
    <text evidence="13 15">Localizes at the plasma membrane in the presence of a CAR protein (e.g. CAR1) (PubMed:25465408). Localized transiently in the vacuole when in complex with RSL1 (PubMed:27495812).</text>
</comment>
<comment type="domain">
    <text evidence="3">Upon interaction with ABA, the 'latch' and 'gate' loops change in conformation leading to a tight dimerization and the creation a surface that enables the receptor to dock into and inhibit the PP2C active site.</text>
</comment>
<comment type="PTM">
    <text evidence="12">Ubiquitynated and degraded by the proteasome upon binding to the E3 ubiquitin-protein ligase RSL1 at the plasma membrane.</text>
</comment>
<comment type="similarity">
    <text evidence="23">Belongs to the PYR/PYL/RCAR abscisic acid intracellular receptor family.</text>
</comment>
<organism>
    <name type="scientific">Arabidopsis thaliana</name>
    <name type="common">Mouse-ear cress</name>
    <dbReference type="NCBI Taxonomy" id="3702"/>
    <lineage>
        <taxon>Eukaryota</taxon>
        <taxon>Viridiplantae</taxon>
        <taxon>Streptophyta</taxon>
        <taxon>Embryophyta</taxon>
        <taxon>Tracheophyta</taxon>
        <taxon>Spermatophyta</taxon>
        <taxon>Magnoliopsida</taxon>
        <taxon>eudicotyledons</taxon>
        <taxon>Gunneridae</taxon>
        <taxon>Pentapetalae</taxon>
        <taxon>rosids</taxon>
        <taxon>malvids</taxon>
        <taxon>Brassicales</taxon>
        <taxon>Brassicaceae</taxon>
        <taxon>Camelineae</taxon>
        <taxon>Arabidopsis</taxon>
    </lineage>
</organism>
<accession>O80920</accession>
<sequence length="207" mass="22435">MLAVHRPSSAVSDGDSVQIPMMIASFQKRFPSLSRDSTAARFHTHEVGPNQCCSAVIQEISAPISTVWSVVRRFDNPQAYKHFLKSCSVIGGDGDNVGSLRQVHVVSGLPAASSTERLDILDDERHVISFSVVGGDHRLSNYRSVTTLHPSPISGTVVVESYVVDVPPGNTKEETCDFVDVIVRCNLQSLAKIAENTAAESKKKMSL</sequence>
<proteinExistence type="evidence at protein level"/>